<protein>
    <recommendedName>
        <fullName evidence="2">tRNA (guanine-N(7)-)-methyltransferase</fullName>
        <ecNumber evidence="2">2.1.1.33</ecNumber>
    </recommendedName>
    <alternativeName>
        <fullName evidence="2">tRNA (guanine(46)-N(7))-methyltransferase</fullName>
    </alternativeName>
    <alternativeName>
        <fullName evidence="2">tRNA(m7G46)-methyltransferase</fullName>
    </alternativeName>
</protein>
<gene>
    <name evidence="2" type="primary">trmB</name>
    <name type="ordered locus">BCE_4841</name>
</gene>
<evidence type="ECO:0000250" key="1"/>
<evidence type="ECO:0000255" key="2">
    <source>
        <dbReference type="HAMAP-Rule" id="MF_01057"/>
    </source>
</evidence>
<name>TRMB_BACC1</name>
<keyword id="KW-0489">Methyltransferase</keyword>
<keyword id="KW-0949">S-adenosyl-L-methionine</keyword>
<keyword id="KW-0808">Transferase</keyword>
<keyword id="KW-0819">tRNA processing</keyword>
<organism>
    <name type="scientific">Bacillus cereus (strain ATCC 10987 / NRS 248)</name>
    <dbReference type="NCBI Taxonomy" id="222523"/>
    <lineage>
        <taxon>Bacteria</taxon>
        <taxon>Bacillati</taxon>
        <taxon>Bacillota</taxon>
        <taxon>Bacilli</taxon>
        <taxon>Bacillales</taxon>
        <taxon>Bacillaceae</taxon>
        <taxon>Bacillus</taxon>
        <taxon>Bacillus cereus group</taxon>
    </lineage>
</organism>
<proteinExistence type="inferred from homology"/>
<feature type="chain" id="PRO_0000171289" description="tRNA (guanine-N(7)-)-methyltransferase">
    <location>
        <begin position="1"/>
        <end position="217"/>
    </location>
</feature>
<feature type="active site" evidence="1">
    <location>
        <position position="118"/>
    </location>
</feature>
<feature type="binding site" evidence="2">
    <location>
        <position position="44"/>
    </location>
    <ligand>
        <name>S-adenosyl-L-methionine</name>
        <dbReference type="ChEBI" id="CHEBI:59789"/>
    </ligand>
</feature>
<feature type="binding site" evidence="2">
    <location>
        <position position="69"/>
    </location>
    <ligand>
        <name>S-adenosyl-L-methionine</name>
        <dbReference type="ChEBI" id="CHEBI:59789"/>
    </ligand>
</feature>
<feature type="binding site" evidence="2">
    <location>
        <position position="96"/>
    </location>
    <ligand>
        <name>S-adenosyl-L-methionine</name>
        <dbReference type="ChEBI" id="CHEBI:59789"/>
    </ligand>
</feature>
<feature type="binding site" evidence="2">
    <location>
        <position position="118"/>
    </location>
    <ligand>
        <name>S-adenosyl-L-methionine</name>
        <dbReference type="ChEBI" id="CHEBI:59789"/>
    </ligand>
</feature>
<feature type="binding site" evidence="2">
    <location>
        <position position="122"/>
    </location>
    <ligand>
        <name>substrate</name>
    </ligand>
</feature>
<feature type="binding site" evidence="2">
    <location>
        <position position="154"/>
    </location>
    <ligand>
        <name>substrate</name>
    </ligand>
</feature>
<feature type="binding site" evidence="2">
    <location>
        <begin position="191"/>
        <end position="194"/>
    </location>
    <ligand>
        <name>substrate</name>
    </ligand>
</feature>
<comment type="function">
    <text evidence="2">Catalyzes the formation of N(7)-methylguanine at position 46 (m7G46) in tRNA.</text>
</comment>
<comment type="catalytic activity">
    <reaction evidence="2">
        <text>guanosine(46) in tRNA + S-adenosyl-L-methionine = N(7)-methylguanosine(46) in tRNA + S-adenosyl-L-homocysteine</text>
        <dbReference type="Rhea" id="RHEA:42708"/>
        <dbReference type="Rhea" id="RHEA-COMP:10188"/>
        <dbReference type="Rhea" id="RHEA-COMP:10189"/>
        <dbReference type="ChEBI" id="CHEBI:57856"/>
        <dbReference type="ChEBI" id="CHEBI:59789"/>
        <dbReference type="ChEBI" id="CHEBI:74269"/>
        <dbReference type="ChEBI" id="CHEBI:74480"/>
        <dbReference type="EC" id="2.1.1.33"/>
    </reaction>
</comment>
<comment type="pathway">
    <text evidence="2">tRNA modification; N(7)-methylguanine-tRNA biosynthesis.</text>
</comment>
<comment type="similarity">
    <text evidence="2">Belongs to the class I-like SAM-binding methyltransferase superfamily. TrmB family.</text>
</comment>
<accession>Q72Z28</accession>
<reference key="1">
    <citation type="journal article" date="2004" name="Nucleic Acids Res.">
        <title>The genome sequence of Bacillus cereus ATCC 10987 reveals metabolic adaptations and a large plasmid related to Bacillus anthracis pXO1.</title>
        <authorList>
            <person name="Rasko D.A."/>
            <person name="Ravel J."/>
            <person name="Oekstad O.A."/>
            <person name="Helgason E."/>
            <person name="Cer R.Z."/>
            <person name="Jiang L."/>
            <person name="Shores K.A."/>
            <person name="Fouts D.E."/>
            <person name="Tourasse N.J."/>
            <person name="Angiuoli S.V."/>
            <person name="Kolonay J.F."/>
            <person name="Nelson W.C."/>
            <person name="Kolstoe A.-B."/>
            <person name="Fraser C.M."/>
            <person name="Read T.D."/>
        </authorList>
    </citation>
    <scope>NUCLEOTIDE SEQUENCE [LARGE SCALE GENOMIC DNA]</scope>
    <source>
        <strain>ATCC 10987 / NRS 248</strain>
    </source>
</reference>
<dbReference type="EC" id="2.1.1.33" evidence="2"/>
<dbReference type="EMBL" id="AE017194">
    <property type="protein sequence ID" value="AAS43742.1"/>
    <property type="molecule type" value="Genomic_DNA"/>
</dbReference>
<dbReference type="SMR" id="Q72Z28"/>
<dbReference type="KEGG" id="bca:BCE_4841"/>
<dbReference type="HOGENOM" id="CLU_050910_2_1_9"/>
<dbReference type="UniPathway" id="UPA00989"/>
<dbReference type="Proteomes" id="UP000002527">
    <property type="component" value="Chromosome"/>
</dbReference>
<dbReference type="GO" id="GO:0043527">
    <property type="term" value="C:tRNA methyltransferase complex"/>
    <property type="evidence" value="ECO:0007669"/>
    <property type="project" value="TreeGrafter"/>
</dbReference>
<dbReference type="GO" id="GO:0008176">
    <property type="term" value="F:tRNA (guanine(46)-N7)-methyltransferase activity"/>
    <property type="evidence" value="ECO:0007669"/>
    <property type="project" value="UniProtKB-UniRule"/>
</dbReference>
<dbReference type="CDD" id="cd02440">
    <property type="entry name" value="AdoMet_MTases"/>
    <property type="match status" value="1"/>
</dbReference>
<dbReference type="FunFam" id="3.40.50.150:FF:000035">
    <property type="entry name" value="tRNA (guanine-N(7)-)-methyltransferase"/>
    <property type="match status" value="1"/>
</dbReference>
<dbReference type="Gene3D" id="3.40.50.150">
    <property type="entry name" value="Vaccinia Virus protein VP39"/>
    <property type="match status" value="1"/>
</dbReference>
<dbReference type="HAMAP" id="MF_01057">
    <property type="entry name" value="tRNA_methyltr_TrmB"/>
    <property type="match status" value="1"/>
</dbReference>
<dbReference type="InterPro" id="IPR029063">
    <property type="entry name" value="SAM-dependent_MTases_sf"/>
</dbReference>
<dbReference type="InterPro" id="IPR003358">
    <property type="entry name" value="tRNA_(Gua-N-7)_MeTrfase_Trmb"/>
</dbReference>
<dbReference type="InterPro" id="IPR055361">
    <property type="entry name" value="tRNA_methyltr_TrmB_bact"/>
</dbReference>
<dbReference type="NCBIfam" id="NF001080">
    <property type="entry name" value="PRK00121.2-2"/>
    <property type="match status" value="1"/>
</dbReference>
<dbReference type="NCBIfam" id="TIGR00091">
    <property type="entry name" value="tRNA (guanosine(46)-N7)-methyltransferase TrmB"/>
    <property type="match status" value="1"/>
</dbReference>
<dbReference type="PANTHER" id="PTHR23417">
    <property type="entry name" value="3-DEOXY-D-MANNO-OCTULOSONIC-ACID TRANSFERASE/TRNA GUANINE-N 7 - -METHYLTRANSFERASE"/>
    <property type="match status" value="1"/>
</dbReference>
<dbReference type="PANTHER" id="PTHR23417:SF14">
    <property type="entry name" value="PENTACOTRIPEPTIDE-REPEAT REGION OF PRORP DOMAIN-CONTAINING PROTEIN"/>
    <property type="match status" value="1"/>
</dbReference>
<dbReference type="Pfam" id="PF02390">
    <property type="entry name" value="Methyltransf_4"/>
    <property type="match status" value="1"/>
</dbReference>
<dbReference type="SUPFAM" id="SSF53335">
    <property type="entry name" value="S-adenosyl-L-methionine-dependent methyltransferases"/>
    <property type="match status" value="1"/>
</dbReference>
<dbReference type="PROSITE" id="PS51625">
    <property type="entry name" value="SAM_MT_TRMB"/>
    <property type="match status" value="1"/>
</dbReference>
<sequence length="217" mass="25600">MRLRHKPYAMDRINEYSHIVIGNPEERAGNWKEVFGNEQPIHIEVGTGRGRFMYDMAKANPHINYIGIEKFTSVVVDALDKLIEEELPNLKLINKDAEDLTVFFAKGEIDRVYLNFSDPWPKKRHTKRRLTYKTFLRNYEEVLVEGGEIHFKTDNQGLFEYSLMSMAEYGMLLTYLSLDLHNSDFEGNIMTEYEEKFSSKGHRIYRVEAKYRTEPMQ</sequence>